<feature type="chain" id="PRO_1000021123" description="4-hydroxy-3-methylbut-2-enyl diphosphate reductase">
    <location>
        <begin position="1"/>
        <end position="320"/>
    </location>
</feature>
<feature type="active site" description="Proton donor" evidence="1">
    <location>
        <position position="126"/>
    </location>
</feature>
<feature type="binding site" evidence="1">
    <location>
        <position position="12"/>
    </location>
    <ligand>
        <name>[4Fe-4S] cluster</name>
        <dbReference type="ChEBI" id="CHEBI:49883"/>
    </ligand>
</feature>
<feature type="binding site" evidence="1">
    <location>
        <position position="41"/>
    </location>
    <ligand>
        <name>(2E)-4-hydroxy-3-methylbut-2-enyl diphosphate</name>
        <dbReference type="ChEBI" id="CHEBI:128753"/>
    </ligand>
</feature>
<feature type="binding site" evidence="1">
    <location>
        <position position="41"/>
    </location>
    <ligand>
        <name>dimethylallyl diphosphate</name>
        <dbReference type="ChEBI" id="CHEBI:57623"/>
    </ligand>
</feature>
<feature type="binding site" evidence="1">
    <location>
        <position position="41"/>
    </location>
    <ligand>
        <name>isopentenyl diphosphate</name>
        <dbReference type="ChEBI" id="CHEBI:128769"/>
    </ligand>
</feature>
<feature type="binding site" evidence="1">
    <location>
        <position position="74"/>
    </location>
    <ligand>
        <name>(2E)-4-hydroxy-3-methylbut-2-enyl diphosphate</name>
        <dbReference type="ChEBI" id="CHEBI:128753"/>
    </ligand>
</feature>
<feature type="binding site" evidence="1">
    <location>
        <position position="74"/>
    </location>
    <ligand>
        <name>dimethylallyl diphosphate</name>
        <dbReference type="ChEBI" id="CHEBI:57623"/>
    </ligand>
</feature>
<feature type="binding site" evidence="1">
    <location>
        <position position="74"/>
    </location>
    <ligand>
        <name>isopentenyl diphosphate</name>
        <dbReference type="ChEBI" id="CHEBI:128769"/>
    </ligand>
</feature>
<feature type="binding site" evidence="1">
    <location>
        <position position="96"/>
    </location>
    <ligand>
        <name>[4Fe-4S] cluster</name>
        <dbReference type="ChEBI" id="CHEBI:49883"/>
    </ligand>
</feature>
<feature type="binding site" evidence="1">
    <location>
        <position position="124"/>
    </location>
    <ligand>
        <name>(2E)-4-hydroxy-3-methylbut-2-enyl diphosphate</name>
        <dbReference type="ChEBI" id="CHEBI:128753"/>
    </ligand>
</feature>
<feature type="binding site" evidence="1">
    <location>
        <position position="124"/>
    </location>
    <ligand>
        <name>dimethylallyl diphosphate</name>
        <dbReference type="ChEBI" id="CHEBI:57623"/>
    </ligand>
</feature>
<feature type="binding site" evidence="1">
    <location>
        <position position="124"/>
    </location>
    <ligand>
        <name>isopentenyl diphosphate</name>
        <dbReference type="ChEBI" id="CHEBI:128769"/>
    </ligand>
</feature>
<feature type="binding site" evidence="1">
    <location>
        <position position="167"/>
    </location>
    <ligand>
        <name>(2E)-4-hydroxy-3-methylbut-2-enyl diphosphate</name>
        <dbReference type="ChEBI" id="CHEBI:128753"/>
    </ligand>
</feature>
<feature type="binding site" evidence="1">
    <location>
        <position position="197"/>
    </location>
    <ligand>
        <name>[4Fe-4S] cluster</name>
        <dbReference type="ChEBI" id="CHEBI:49883"/>
    </ligand>
</feature>
<feature type="binding site" evidence="1">
    <location>
        <position position="225"/>
    </location>
    <ligand>
        <name>(2E)-4-hydroxy-3-methylbut-2-enyl diphosphate</name>
        <dbReference type="ChEBI" id="CHEBI:128753"/>
    </ligand>
</feature>
<feature type="binding site" evidence="1">
    <location>
        <position position="225"/>
    </location>
    <ligand>
        <name>dimethylallyl diphosphate</name>
        <dbReference type="ChEBI" id="CHEBI:57623"/>
    </ligand>
</feature>
<feature type="binding site" evidence="1">
    <location>
        <position position="225"/>
    </location>
    <ligand>
        <name>isopentenyl diphosphate</name>
        <dbReference type="ChEBI" id="CHEBI:128769"/>
    </ligand>
</feature>
<feature type="binding site" evidence="1">
    <location>
        <position position="226"/>
    </location>
    <ligand>
        <name>(2E)-4-hydroxy-3-methylbut-2-enyl diphosphate</name>
        <dbReference type="ChEBI" id="CHEBI:128753"/>
    </ligand>
</feature>
<feature type="binding site" evidence="1">
    <location>
        <position position="226"/>
    </location>
    <ligand>
        <name>dimethylallyl diphosphate</name>
        <dbReference type="ChEBI" id="CHEBI:57623"/>
    </ligand>
</feature>
<feature type="binding site" evidence="1">
    <location>
        <position position="226"/>
    </location>
    <ligand>
        <name>isopentenyl diphosphate</name>
        <dbReference type="ChEBI" id="CHEBI:128769"/>
    </ligand>
</feature>
<feature type="binding site" evidence="1">
    <location>
        <position position="227"/>
    </location>
    <ligand>
        <name>(2E)-4-hydroxy-3-methylbut-2-enyl diphosphate</name>
        <dbReference type="ChEBI" id="CHEBI:128753"/>
    </ligand>
</feature>
<feature type="binding site" evidence="1">
    <location>
        <position position="227"/>
    </location>
    <ligand>
        <name>dimethylallyl diphosphate</name>
        <dbReference type="ChEBI" id="CHEBI:57623"/>
    </ligand>
</feature>
<feature type="binding site" evidence="1">
    <location>
        <position position="227"/>
    </location>
    <ligand>
        <name>isopentenyl diphosphate</name>
        <dbReference type="ChEBI" id="CHEBI:128769"/>
    </ligand>
</feature>
<feature type="binding site" evidence="1">
    <location>
        <position position="269"/>
    </location>
    <ligand>
        <name>(2E)-4-hydroxy-3-methylbut-2-enyl diphosphate</name>
        <dbReference type="ChEBI" id="CHEBI:128753"/>
    </ligand>
</feature>
<feature type="binding site" evidence="1">
    <location>
        <position position="269"/>
    </location>
    <ligand>
        <name>dimethylallyl diphosphate</name>
        <dbReference type="ChEBI" id="CHEBI:57623"/>
    </ligand>
</feature>
<feature type="binding site" evidence="1">
    <location>
        <position position="269"/>
    </location>
    <ligand>
        <name>isopentenyl diphosphate</name>
        <dbReference type="ChEBI" id="CHEBI:128769"/>
    </ligand>
</feature>
<accession>A0Q4T9</accession>
<gene>
    <name evidence="1" type="primary">ispH</name>
    <name type="ordered locus">FTN_0348</name>
</gene>
<protein>
    <recommendedName>
        <fullName evidence="1">4-hydroxy-3-methylbut-2-enyl diphosphate reductase</fullName>
        <shortName evidence="1">HMBPP reductase</shortName>
        <ecNumber evidence="1">1.17.7.4</ecNumber>
    </recommendedName>
</protein>
<organism>
    <name type="scientific">Francisella tularensis subsp. novicida (strain U112)</name>
    <dbReference type="NCBI Taxonomy" id="401614"/>
    <lineage>
        <taxon>Bacteria</taxon>
        <taxon>Pseudomonadati</taxon>
        <taxon>Pseudomonadota</taxon>
        <taxon>Gammaproteobacteria</taxon>
        <taxon>Thiotrichales</taxon>
        <taxon>Francisellaceae</taxon>
        <taxon>Francisella</taxon>
    </lineage>
</organism>
<evidence type="ECO:0000255" key="1">
    <source>
        <dbReference type="HAMAP-Rule" id="MF_00191"/>
    </source>
</evidence>
<proteinExistence type="inferred from homology"/>
<dbReference type="EC" id="1.17.7.4" evidence="1"/>
<dbReference type="EMBL" id="CP000439">
    <property type="protein sequence ID" value="ABK89254.1"/>
    <property type="molecule type" value="Genomic_DNA"/>
</dbReference>
<dbReference type="RefSeq" id="WP_003038363.1">
    <property type="nucleotide sequence ID" value="NC_008601.1"/>
</dbReference>
<dbReference type="SMR" id="A0Q4T9"/>
<dbReference type="KEGG" id="ftn:FTN_0348"/>
<dbReference type="KEGG" id="ftx:AW25_1691"/>
<dbReference type="BioCyc" id="FTUL401614:G1G75-361-MONOMER"/>
<dbReference type="UniPathway" id="UPA00056">
    <property type="reaction ID" value="UER00097"/>
</dbReference>
<dbReference type="UniPathway" id="UPA00059">
    <property type="reaction ID" value="UER00105"/>
</dbReference>
<dbReference type="Proteomes" id="UP000000762">
    <property type="component" value="Chromosome"/>
</dbReference>
<dbReference type="GO" id="GO:0051539">
    <property type="term" value="F:4 iron, 4 sulfur cluster binding"/>
    <property type="evidence" value="ECO:0007669"/>
    <property type="project" value="UniProtKB-UniRule"/>
</dbReference>
<dbReference type="GO" id="GO:0051745">
    <property type="term" value="F:4-hydroxy-3-methylbut-2-enyl diphosphate reductase activity"/>
    <property type="evidence" value="ECO:0007669"/>
    <property type="project" value="UniProtKB-UniRule"/>
</dbReference>
<dbReference type="GO" id="GO:0046872">
    <property type="term" value="F:metal ion binding"/>
    <property type="evidence" value="ECO:0007669"/>
    <property type="project" value="UniProtKB-KW"/>
</dbReference>
<dbReference type="GO" id="GO:0050992">
    <property type="term" value="P:dimethylallyl diphosphate biosynthetic process"/>
    <property type="evidence" value="ECO:0007669"/>
    <property type="project" value="UniProtKB-UniRule"/>
</dbReference>
<dbReference type="GO" id="GO:0019288">
    <property type="term" value="P:isopentenyl diphosphate biosynthetic process, methylerythritol 4-phosphate pathway"/>
    <property type="evidence" value="ECO:0007669"/>
    <property type="project" value="UniProtKB-UniRule"/>
</dbReference>
<dbReference type="GO" id="GO:0016114">
    <property type="term" value="P:terpenoid biosynthetic process"/>
    <property type="evidence" value="ECO:0007669"/>
    <property type="project" value="UniProtKB-UniRule"/>
</dbReference>
<dbReference type="CDD" id="cd13944">
    <property type="entry name" value="lytB_ispH"/>
    <property type="match status" value="1"/>
</dbReference>
<dbReference type="Gene3D" id="3.40.50.11270">
    <property type="match status" value="1"/>
</dbReference>
<dbReference type="Gene3D" id="3.40.1010.20">
    <property type="entry name" value="4-hydroxy-3-methylbut-2-enyl diphosphate reductase, catalytic domain"/>
    <property type="match status" value="2"/>
</dbReference>
<dbReference type="HAMAP" id="MF_00191">
    <property type="entry name" value="IspH"/>
    <property type="match status" value="1"/>
</dbReference>
<dbReference type="InterPro" id="IPR003451">
    <property type="entry name" value="LytB/IspH"/>
</dbReference>
<dbReference type="NCBIfam" id="TIGR00216">
    <property type="entry name" value="ispH_lytB"/>
    <property type="match status" value="1"/>
</dbReference>
<dbReference type="NCBIfam" id="NF002188">
    <property type="entry name" value="PRK01045.1-2"/>
    <property type="match status" value="1"/>
</dbReference>
<dbReference type="NCBIfam" id="NF002190">
    <property type="entry name" value="PRK01045.1-4"/>
    <property type="match status" value="1"/>
</dbReference>
<dbReference type="PANTHER" id="PTHR30426">
    <property type="entry name" value="4-HYDROXY-3-METHYLBUT-2-ENYL DIPHOSPHATE REDUCTASE"/>
    <property type="match status" value="1"/>
</dbReference>
<dbReference type="PANTHER" id="PTHR30426:SF0">
    <property type="entry name" value="4-HYDROXY-3-METHYLBUT-2-ENYL DIPHOSPHATE REDUCTASE"/>
    <property type="match status" value="1"/>
</dbReference>
<dbReference type="Pfam" id="PF02401">
    <property type="entry name" value="LYTB"/>
    <property type="match status" value="1"/>
</dbReference>
<name>ISPH_FRATN</name>
<sequence>MKILLANPRGFCAGVSRAVETVEKVLEVEKSPVYVRHEVVHNKVVVDSLKKKGVVFVKEVDEVPDDAVCIFSAHGVSLKVEEAAAKKNLVLYDATCPLVTKVHRGVRLASNNDAECILIGHKGHPEVQGTMGQYRSKKGAIYLIESEEDLNKLTIKDPDNLYYATQTTLSVDETQGIIQALKDKYPNIKGPKKEDICYATQNRQTAIKAMLKHIDVLVVVGSQNSSNSNRLKELATLAGIDAYLVDNPKDVDKLWFDNKKVCGVSAGASAPEYLVQQIISQISKVCSTEVEVEEFEGIKEEVYFPLPRLLKQKIGTGKVE</sequence>
<reference key="1">
    <citation type="journal article" date="2007" name="Genome Biol.">
        <title>Comparison of Francisella tularensis genomes reveals evolutionary events associated with the emergence of human pathogenic strains.</title>
        <authorList>
            <person name="Rohmer L."/>
            <person name="Fong C."/>
            <person name="Abmayr S."/>
            <person name="Wasnick M."/>
            <person name="Larson Freeman T.J."/>
            <person name="Radey M."/>
            <person name="Guina T."/>
            <person name="Svensson K."/>
            <person name="Hayden H.S."/>
            <person name="Jacobs M."/>
            <person name="Gallagher L.A."/>
            <person name="Manoil C."/>
            <person name="Ernst R.K."/>
            <person name="Drees B."/>
            <person name="Buckley D."/>
            <person name="Haugen E."/>
            <person name="Bovee D."/>
            <person name="Zhou Y."/>
            <person name="Chang J."/>
            <person name="Levy R."/>
            <person name="Lim R."/>
            <person name="Gillett W."/>
            <person name="Guenthener D."/>
            <person name="Kang A."/>
            <person name="Shaffer S.A."/>
            <person name="Taylor G."/>
            <person name="Chen J."/>
            <person name="Gallis B."/>
            <person name="D'Argenio D.A."/>
            <person name="Forsman M."/>
            <person name="Olson M.V."/>
            <person name="Goodlett D.R."/>
            <person name="Kaul R."/>
            <person name="Miller S.I."/>
            <person name="Brittnacher M.J."/>
        </authorList>
    </citation>
    <scope>NUCLEOTIDE SEQUENCE [LARGE SCALE GENOMIC DNA]</scope>
    <source>
        <strain>U112</strain>
    </source>
</reference>
<keyword id="KW-0004">4Fe-4S</keyword>
<keyword id="KW-0408">Iron</keyword>
<keyword id="KW-0411">Iron-sulfur</keyword>
<keyword id="KW-0414">Isoprene biosynthesis</keyword>
<keyword id="KW-0479">Metal-binding</keyword>
<keyword id="KW-0560">Oxidoreductase</keyword>
<comment type="function">
    <text evidence="1">Catalyzes the conversion of 1-hydroxy-2-methyl-2-(E)-butenyl 4-diphosphate (HMBPP) into a mixture of isopentenyl diphosphate (IPP) and dimethylallyl diphosphate (DMAPP). Acts in the terminal step of the DOXP/MEP pathway for isoprenoid precursor biosynthesis.</text>
</comment>
<comment type="catalytic activity">
    <reaction evidence="1">
        <text>isopentenyl diphosphate + 2 oxidized [2Fe-2S]-[ferredoxin] + H2O = (2E)-4-hydroxy-3-methylbut-2-enyl diphosphate + 2 reduced [2Fe-2S]-[ferredoxin] + 2 H(+)</text>
        <dbReference type="Rhea" id="RHEA:24488"/>
        <dbReference type="Rhea" id="RHEA-COMP:10000"/>
        <dbReference type="Rhea" id="RHEA-COMP:10001"/>
        <dbReference type="ChEBI" id="CHEBI:15377"/>
        <dbReference type="ChEBI" id="CHEBI:15378"/>
        <dbReference type="ChEBI" id="CHEBI:33737"/>
        <dbReference type="ChEBI" id="CHEBI:33738"/>
        <dbReference type="ChEBI" id="CHEBI:128753"/>
        <dbReference type="ChEBI" id="CHEBI:128769"/>
        <dbReference type="EC" id="1.17.7.4"/>
    </reaction>
</comment>
<comment type="catalytic activity">
    <reaction evidence="1">
        <text>dimethylallyl diphosphate + 2 oxidized [2Fe-2S]-[ferredoxin] + H2O = (2E)-4-hydroxy-3-methylbut-2-enyl diphosphate + 2 reduced [2Fe-2S]-[ferredoxin] + 2 H(+)</text>
        <dbReference type="Rhea" id="RHEA:24825"/>
        <dbReference type="Rhea" id="RHEA-COMP:10000"/>
        <dbReference type="Rhea" id="RHEA-COMP:10001"/>
        <dbReference type="ChEBI" id="CHEBI:15377"/>
        <dbReference type="ChEBI" id="CHEBI:15378"/>
        <dbReference type="ChEBI" id="CHEBI:33737"/>
        <dbReference type="ChEBI" id="CHEBI:33738"/>
        <dbReference type="ChEBI" id="CHEBI:57623"/>
        <dbReference type="ChEBI" id="CHEBI:128753"/>
        <dbReference type="EC" id="1.17.7.4"/>
    </reaction>
</comment>
<comment type="cofactor">
    <cofactor evidence="1">
        <name>[4Fe-4S] cluster</name>
        <dbReference type="ChEBI" id="CHEBI:49883"/>
    </cofactor>
    <text evidence="1">Binds 1 [4Fe-4S] cluster per subunit.</text>
</comment>
<comment type="pathway">
    <text evidence="1">Isoprenoid biosynthesis; dimethylallyl diphosphate biosynthesis; dimethylallyl diphosphate from (2E)-4-hydroxy-3-methylbutenyl diphosphate: step 1/1.</text>
</comment>
<comment type="pathway">
    <text evidence="1">Isoprenoid biosynthesis; isopentenyl diphosphate biosynthesis via DXP pathway; isopentenyl diphosphate from 1-deoxy-D-xylulose 5-phosphate: step 6/6.</text>
</comment>
<comment type="similarity">
    <text evidence="1">Belongs to the IspH family.</text>
</comment>